<comment type="function">
    <text evidence="1">Does not bind DNA itself but suppresses both HES1-mediated N box-dependent transcriptional repression and binding of HES1 to E box sequences. Also suppresses HES1-mediated inhibition of the heterodimer formed by ASCL1/MASH1 and TCF3/E47, allowing ASCL1 and TCF3 to up-regulate transcription in its presence. Promotes cell differentiation (By similarity).</text>
</comment>
<comment type="subunit">
    <text evidence="1">Transcription repression requires formation of a complex with a corepressor protein of the Groucho/TLE family. Interacts with HES1 (By similarity).</text>
</comment>
<comment type="interaction">
    <interactant intactId="EBI-7469266">
        <id>Q96HZ4</id>
    </interactant>
    <interactant intactId="EBI-725606">
        <id>Q9NWQ9</id>
        <label>C14orf119</label>
    </interactant>
    <organismsDiffer>false</organismsDiffer>
    <experiments>3</experiments>
</comment>
<comment type="interaction">
    <interactant intactId="EBI-7469266">
        <id>Q96HZ4</id>
    </interactant>
    <interactant intactId="EBI-10172052">
        <id>P60411</id>
        <label>KRTAP10-9</label>
    </interactant>
    <organismsDiffer>false</organismsDiffer>
    <experiments>3</experiments>
</comment>
<comment type="interaction">
    <interactant intactId="EBI-7469266">
        <id>Q96HZ4</id>
    </interactant>
    <interactant intactId="EBI-752037">
        <id>P61019</id>
        <label>RAB2A</label>
    </interactant>
    <organismsDiffer>false</organismsDiffer>
    <experiments>3</experiments>
</comment>
<comment type="interaction">
    <interactant intactId="EBI-7469266">
        <id>Q96HZ4</id>
    </interactant>
    <interactant intactId="EBI-358489">
        <id>Q96GM5</id>
        <label>SMARCD1</label>
    </interactant>
    <organismsDiffer>false</organismsDiffer>
    <experiments>3</experiments>
</comment>
<comment type="interaction">
    <interactant intactId="EBI-7469266">
        <id>Q96HZ4</id>
    </interactant>
    <interactant intactId="EBI-711424">
        <id>Q04724</id>
        <label>TLE1</label>
    </interactant>
    <organismsDiffer>false</organismsDiffer>
    <experiments>3</experiments>
</comment>
<comment type="subcellular location">
    <subcellularLocation>
        <location evidence="7">Nucleus</location>
    </subcellularLocation>
</comment>
<comment type="alternative products">
    <event type="alternative splicing"/>
    <isoform>
        <id>Q96HZ4-1</id>
        <name>1</name>
        <sequence type="displayed"/>
    </isoform>
    <isoform>
        <id>Q96HZ4-2</id>
        <name>2</name>
        <sequence type="described" ref="VSP_011152"/>
    </isoform>
    <isoform>
        <id>Q96HZ4-3</id>
        <name>3</name>
        <sequence type="described" ref="VSP_040128"/>
    </isoform>
    <isoform>
        <id>Q96HZ4-4</id>
        <name>4</name>
        <sequence type="described" ref="VSP_055615 VSP_055616"/>
    </isoform>
</comment>
<comment type="domain">
    <text evidence="1">The C-terminal WRPW motif is a transcriptional repression domain necessary for the interaction with Groucho/TLE family members, transcriptional corepressors recruited to specific target DNA by Hairy-related proteins.</text>
</comment>
<comment type="domain">
    <text>Has a particular type of basic domain (presence of a helix-interrupting proline) that binds to the N-box (CACNAG), rather than the canonical E-box (CANNTG).</text>
</comment>
<keyword id="KW-0025">Alternative splicing</keyword>
<keyword id="KW-0217">Developmental protein</keyword>
<keyword id="KW-0221">Differentiation</keyword>
<keyword id="KW-0539">Nucleus</keyword>
<keyword id="KW-1267">Proteomics identification</keyword>
<keyword id="KW-1185">Reference proteome</keyword>
<keyword id="KW-0678">Repressor</keyword>
<keyword id="KW-0804">Transcription</keyword>
<keyword id="KW-0805">Transcription regulation</keyword>
<evidence type="ECO:0000250" key="1"/>
<evidence type="ECO:0000255" key="2">
    <source>
        <dbReference type="PROSITE-ProRule" id="PRU00380"/>
    </source>
</evidence>
<evidence type="ECO:0000255" key="3">
    <source>
        <dbReference type="PROSITE-ProRule" id="PRU00981"/>
    </source>
</evidence>
<evidence type="ECO:0000256" key="4">
    <source>
        <dbReference type="SAM" id="MobiDB-lite"/>
    </source>
</evidence>
<evidence type="ECO:0000303" key="5">
    <source>
    </source>
</evidence>
<evidence type="ECO:0000303" key="6">
    <source>
    </source>
</evidence>
<evidence type="ECO:0000305" key="7"/>
<evidence type="ECO:0000312" key="8">
    <source>
        <dbReference type="EMBL" id="AAH07939.1"/>
    </source>
</evidence>
<evidence type="ECO:0000312" key="9">
    <source>
        <dbReference type="EMBL" id="AAK51634.1"/>
    </source>
</evidence>
<evidence type="ECO:0000312" key="10">
    <source>
        <dbReference type="EMBL" id="BAA96082.1"/>
    </source>
</evidence>
<reference evidence="10" key="1">
    <citation type="journal article" date="2000" name="Development">
        <title>The bHLH gene Hes6, an inhibitor of Hes1, promotes neuronal differentiation.</title>
        <authorList>
            <person name="Bae S.-K."/>
            <person name="Bessho Y."/>
            <person name="Hojo M."/>
            <person name="Kageyama R."/>
        </authorList>
    </citation>
    <scope>NUCLEOTIDE SEQUENCE [MRNA] (ISOFORM 3)</scope>
</reference>
<reference evidence="9" key="2">
    <citation type="journal article" date="2000" name="Mech. Dev.">
        <title>Expression of mouse HES-6, a new member of the Hairy/Enhancer of split family of bHLH transcription factors.</title>
        <authorList>
            <person name="Vasiliauskas D."/>
            <person name="Stern C.D."/>
        </authorList>
    </citation>
    <scope>NUCLEOTIDE SEQUENCE [MRNA] (ISOFORM 1)</scope>
</reference>
<reference key="3">
    <citation type="journal article" date="2004" name="Nat. Genet.">
        <title>Complete sequencing and characterization of 21,243 full-length human cDNAs.</title>
        <authorList>
            <person name="Ota T."/>
            <person name="Suzuki Y."/>
            <person name="Nishikawa T."/>
            <person name="Otsuki T."/>
            <person name="Sugiyama T."/>
            <person name="Irie R."/>
            <person name="Wakamatsu A."/>
            <person name="Hayashi K."/>
            <person name="Sato H."/>
            <person name="Nagai K."/>
            <person name="Kimura K."/>
            <person name="Makita H."/>
            <person name="Sekine M."/>
            <person name="Obayashi M."/>
            <person name="Nishi T."/>
            <person name="Shibahara T."/>
            <person name="Tanaka T."/>
            <person name="Ishii S."/>
            <person name="Yamamoto J."/>
            <person name="Saito K."/>
            <person name="Kawai Y."/>
            <person name="Isono Y."/>
            <person name="Nakamura Y."/>
            <person name="Nagahari K."/>
            <person name="Murakami K."/>
            <person name="Yasuda T."/>
            <person name="Iwayanagi T."/>
            <person name="Wagatsuma M."/>
            <person name="Shiratori A."/>
            <person name="Sudo H."/>
            <person name="Hosoiri T."/>
            <person name="Kaku Y."/>
            <person name="Kodaira H."/>
            <person name="Kondo H."/>
            <person name="Sugawara M."/>
            <person name="Takahashi M."/>
            <person name="Kanda K."/>
            <person name="Yokoi T."/>
            <person name="Furuya T."/>
            <person name="Kikkawa E."/>
            <person name="Omura Y."/>
            <person name="Abe K."/>
            <person name="Kamihara K."/>
            <person name="Katsuta N."/>
            <person name="Sato K."/>
            <person name="Tanikawa M."/>
            <person name="Yamazaki M."/>
            <person name="Ninomiya K."/>
            <person name="Ishibashi T."/>
            <person name="Yamashita H."/>
            <person name="Murakawa K."/>
            <person name="Fujimori K."/>
            <person name="Tanai H."/>
            <person name="Kimata M."/>
            <person name="Watanabe M."/>
            <person name="Hiraoka S."/>
            <person name="Chiba Y."/>
            <person name="Ishida S."/>
            <person name="Ono Y."/>
            <person name="Takiguchi S."/>
            <person name="Watanabe S."/>
            <person name="Yosida M."/>
            <person name="Hotuta T."/>
            <person name="Kusano J."/>
            <person name="Kanehori K."/>
            <person name="Takahashi-Fujii A."/>
            <person name="Hara H."/>
            <person name="Tanase T.-O."/>
            <person name="Nomura Y."/>
            <person name="Togiya S."/>
            <person name="Komai F."/>
            <person name="Hara R."/>
            <person name="Takeuchi K."/>
            <person name="Arita M."/>
            <person name="Imose N."/>
            <person name="Musashino K."/>
            <person name="Yuuki H."/>
            <person name="Oshima A."/>
            <person name="Sasaki N."/>
            <person name="Aotsuka S."/>
            <person name="Yoshikawa Y."/>
            <person name="Matsunawa H."/>
            <person name="Ichihara T."/>
            <person name="Shiohata N."/>
            <person name="Sano S."/>
            <person name="Moriya S."/>
            <person name="Momiyama H."/>
            <person name="Satoh N."/>
            <person name="Takami S."/>
            <person name="Terashima Y."/>
            <person name="Suzuki O."/>
            <person name="Nakagawa S."/>
            <person name="Senoh A."/>
            <person name="Mizoguchi H."/>
            <person name="Goto Y."/>
            <person name="Shimizu F."/>
            <person name="Wakebe H."/>
            <person name="Hishigaki H."/>
            <person name="Watanabe T."/>
            <person name="Sugiyama A."/>
            <person name="Takemoto M."/>
            <person name="Kawakami B."/>
            <person name="Yamazaki M."/>
            <person name="Watanabe K."/>
            <person name="Kumagai A."/>
            <person name="Itakura S."/>
            <person name="Fukuzumi Y."/>
            <person name="Fujimori Y."/>
            <person name="Komiyama M."/>
            <person name="Tashiro H."/>
            <person name="Tanigami A."/>
            <person name="Fujiwara T."/>
            <person name="Ono T."/>
            <person name="Yamada K."/>
            <person name="Fujii Y."/>
            <person name="Ozaki K."/>
            <person name="Hirao M."/>
            <person name="Ohmori Y."/>
            <person name="Kawabata A."/>
            <person name="Hikiji T."/>
            <person name="Kobatake N."/>
            <person name="Inagaki H."/>
            <person name="Ikema Y."/>
            <person name="Okamoto S."/>
            <person name="Okitani R."/>
            <person name="Kawakami T."/>
            <person name="Noguchi S."/>
            <person name="Itoh T."/>
            <person name="Shigeta K."/>
            <person name="Senba T."/>
            <person name="Matsumura K."/>
            <person name="Nakajima Y."/>
            <person name="Mizuno T."/>
            <person name="Morinaga M."/>
            <person name="Sasaki M."/>
            <person name="Togashi T."/>
            <person name="Oyama M."/>
            <person name="Hata H."/>
            <person name="Watanabe M."/>
            <person name="Komatsu T."/>
            <person name="Mizushima-Sugano J."/>
            <person name="Satoh T."/>
            <person name="Shirai Y."/>
            <person name="Takahashi Y."/>
            <person name="Nakagawa K."/>
            <person name="Okumura K."/>
            <person name="Nagase T."/>
            <person name="Nomura N."/>
            <person name="Kikuchi H."/>
            <person name="Masuho Y."/>
            <person name="Yamashita R."/>
            <person name="Nakai K."/>
            <person name="Yada T."/>
            <person name="Nakamura Y."/>
            <person name="Ohara O."/>
            <person name="Isogai T."/>
            <person name="Sugano S."/>
        </authorList>
    </citation>
    <scope>NUCLEOTIDE SEQUENCE [LARGE SCALE MRNA] (ISOFORMS 1 AND 2)</scope>
    <source>
        <tissue>Ovary</tissue>
    </source>
</reference>
<reference key="4">
    <citation type="journal article" date="2005" name="Nature">
        <title>Generation and annotation of the DNA sequences of human chromosomes 2 and 4.</title>
        <authorList>
            <person name="Hillier L.W."/>
            <person name="Graves T.A."/>
            <person name="Fulton R.S."/>
            <person name="Fulton L.A."/>
            <person name="Pepin K.H."/>
            <person name="Minx P."/>
            <person name="Wagner-McPherson C."/>
            <person name="Layman D."/>
            <person name="Wylie K."/>
            <person name="Sekhon M."/>
            <person name="Becker M.C."/>
            <person name="Fewell G.A."/>
            <person name="Delehaunty K.D."/>
            <person name="Miner T.L."/>
            <person name="Nash W.E."/>
            <person name="Kremitzki C."/>
            <person name="Oddy L."/>
            <person name="Du H."/>
            <person name="Sun H."/>
            <person name="Bradshaw-Cordum H."/>
            <person name="Ali J."/>
            <person name="Carter J."/>
            <person name="Cordes M."/>
            <person name="Harris A."/>
            <person name="Isak A."/>
            <person name="van Brunt A."/>
            <person name="Nguyen C."/>
            <person name="Du F."/>
            <person name="Courtney L."/>
            <person name="Kalicki J."/>
            <person name="Ozersky P."/>
            <person name="Abbott S."/>
            <person name="Armstrong J."/>
            <person name="Belter E.A."/>
            <person name="Caruso L."/>
            <person name="Cedroni M."/>
            <person name="Cotton M."/>
            <person name="Davidson T."/>
            <person name="Desai A."/>
            <person name="Elliott G."/>
            <person name="Erb T."/>
            <person name="Fronick C."/>
            <person name="Gaige T."/>
            <person name="Haakenson W."/>
            <person name="Haglund K."/>
            <person name="Holmes A."/>
            <person name="Harkins R."/>
            <person name="Kim K."/>
            <person name="Kruchowski S.S."/>
            <person name="Strong C.M."/>
            <person name="Grewal N."/>
            <person name="Goyea E."/>
            <person name="Hou S."/>
            <person name="Levy A."/>
            <person name="Martinka S."/>
            <person name="Mead K."/>
            <person name="McLellan M.D."/>
            <person name="Meyer R."/>
            <person name="Randall-Maher J."/>
            <person name="Tomlinson C."/>
            <person name="Dauphin-Kohlberg S."/>
            <person name="Kozlowicz-Reilly A."/>
            <person name="Shah N."/>
            <person name="Swearengen-Shahid S."/>
            <person name="Snider J."/>
            <person name="Strong J.T."/>
            <person name="Thompson J."/>
            <person name="Yoakum M."/>
            <person name="Leonard S."/>
            <person name="Pearman C."/>
            <person name="Trani L."/>
            <person name="Radionenko M."/>
            <person name="Waligorski J.E."/>
            <person name="Wang C."/>
            <person name="Rock S.M."/>
            <person name="Tin-Wollam A.-M."/>
            <person name="Maupin R."/>
            <person name="Latreille P."/>
            <person name="Wendl M.C."/>
            <person name="Yang S.-P."/>
            <person name="Pohl C."/>
            <person name="Wallis J.W."/>
            <person name="Spieth J."/>
            <person name="Bieri T.A."/>
            <person name="Berkowicz N."/>
            <person name="Nelson J.O."/>
            <person name="Osborne J."/>
            <person name="Ding L."/>
            <person name="Meyer R."/>
            <person name="Sabo A."/>
            <person name="Shotland Y."/>
            <person name="Sinha P."/>
            <person name="Wohldmann P.E."/>
            <person name="Cook L.L."/>
            <person name="Hickenbotham M.T."/>
            <person name="Eldred J."/>
            <person name="Williams D."/>
            <person name="Jones T.A."/>
            <person name="She X."/>
            <person name="Ciccarelli F.D."/>
            <person name="Izaurralde E."/>
            <person name="Taylor J."/>
            <person name="Schmutz J."/>
            <person name="Myers R.M."/>
            <person name="Cox D.R."/>
            <person name="Huang X."/>
            <person name="McPherson J.D."/>
            <person name="Mardis E.R."/>
            <person name="Clifton S.W."/>
            <person name="Warren W.C."/>
            <person name="Chinwalla A.T."/>
            <person name="Eddy S.R."/>
            <person name="Marra M.A."/>
            <person name="Ovcharenko I."/>
            <person name="Furey T.S."/>
            <person name="Miller W."/>
            <person name="Eichler E.E."/>
            <person name="Bork P."/>
            <person name="Suyama M."/>
            <person name="Torrents D."/>
            <person name="Waterston R.H."/>
            <person name="Wilson R.K."/>
        </authorList>
    </citation>
    <scope>NUCLEOTIDE SEQUENCE [LARGE SCALE GENOMIC DNA]</scope>
</reference>
<reference key="5">
    <citation type="submission" date="2005-07" db="EMBL/GenBank/DDBJ databases">
        <authorList>
            <person name="Mural R.J."/>
            <person name="Istrail S."/>
            <person name="Sutton G.G."/>
            <person name="Florea L."/>
            <person name="Halpern A.L."/>
            <person name="Mobarry C.M."/>
            <person name="Lippert R."/>
            <person name="Walenz B."/>
            <person name="Shatkay H."/>
            <person name="Dew I."/>
            <person name="Miller J.R."/>
            <person name="Flanigan M.J."/>
            <person name="Edwards N.J."/>
            <person name="Bolanos R."/>
            <person name="Fasulo D."/>
            <person name="Halldorsson B.V."/>
            <person name="Hannenhalli S."/>
            <person name="Turner R."/>
            <person name="Yooseph S."/>
            <person name="Lu F."/>
            <person name="Nusskern D.R."/>
            <person name="Shue B.C."/>
            <person name="Zheng X.H."/>
            <person name="Zhong F."/>
            <person name="Delcher A.L."/>
            <person name="Huson D.H."/>
            <person name="Kravitz S.A."/>
            <person name="Mouchard L."/>
            <person name="Reinert K."/>
            <person name="Remington K.A."/>
            <person name="Clark A.G."/>
            <person name="Waterman M.S."/>
            <person name="Eichler E.E."/>
            <person name="Adams M.D."/>
            <person name="Hunkapiller M.W."/>
            <person name="Myers E.W."/>
            <person name="Venter J.C."/>
        </authorList>
    </citation>
    <scope>NUCLEOTIDE SEQUENCE [LARGE SCALE GENOMIC DNA]</scope>
</reference>
<reference evidence="8" key="6">
    <citation type="journal article" date="2004" name="Genome Res.">
        <title>The status, quality, and expansion of the NIH full-length cDNA project: the Mammalian Gene Collection (MGC).</title>
        <authorList>
            <consortium name="The MGC Project Team"/>
        </authorList>
    </citation>
    <scope>NUCLEOTIDE SEQUENCE [LARGE SCALE MRNA] (ISOFORM 1)</scope>
    <source>
        <tissue evidence="8">Muscle</tissue>
    </source>
</reference>
<sequence>MAPPAAPGRDRVGREDEDGWETRGDRKARKPLVEKKRRARINESLQELRLLLAGAEVQAKLENAEVLELTVRRVQGVLRGRAREREQLQAEASERFAAGYIQCMHEVHTFVSTCQAIDATVAAELLNHLLESMPLREGSSFQDLLGDALAGPPRAPGRSGWPAGGAPGSPIPSPPGPGDDLCSDLEEAPEAELSQAPAEGPDLVPAALGSLTTAQIARSVWRPW</sequence>
<organism>
    <name type="scientific">Homo sapiens</name>
    <name type="common">Human</name>
    <dbReference type="NCBI Taxonomy" id="9606"/>
    <lineage>
        <taxon>Eukaryota</taxon>
        <taxon>Metazoa</taxon>
        <taxon>Chordata</taxon>
        <taxon>Craniata</taxon>
        <taxon>Vertebrata</taxon>
        <taxon>Euteleostomi</taxon>
        <taxon>Mammalia</taxon>
        <taxon>Eutheria</taxon>
        <taxon>Euarchontoglires</taxon>
        <taxon>Primates</taxon>
        <taxon>Haplorrhini</taxon>
        <taxon>Catarrhini</taxon>
        <taxon>Hominidae</taxon>
        <taxon>Homo</taxon>
    </lineage>
</organism>
<protein>
    <recommendedName>
        <fullName>Transcription cofactor HES-6</fullName>
    </recommendedName>
    <alternativeName>
        <fullName>C-HAIRY1</fullName>
    </alternativeName>
    <alternativeName>
        <fullName>Class B basic helix-loop-helix protein 41</fullName>
        <shortName>bHLHb41</shortName>
    </alternativeName>
    <alternativeName>
        <fullName>Hairy and enhancer of split 6</fullName>
    </alternativeName>
</protein>
<proteinExistence type="evidence at protein level"/>
<dbReference type="EMBL" id="AB035179">
    <property type="protein sequence ID" value="BAA96082.1"/>
    <property type="molecule type" value="mRNA"/>
</dbReference>
<dbReference type="EMBL" id="AF260237">
    <property type="protein sequence ID" value="AAK51634.1"/>
    <property type="molecule type" value="mRNA"/>
</dbReference>
<dbReference type="EMBL" id="AK075040">
    <property type="protein sequence ID" value="BAC11368.1"/>
    <property type="molecule type" value="mRNA"/>
</dbReference>
<dbReference type="EMBL" id="AK293111">
    <property type="protein sequence ID" value="BAF85800.1"/>
    <property type="molecule type" value="mRNA"/>
</dbReference>
<dbReference type="EMBL" id="AC016757">
    <property type="protein sequence ID" value="AAY24337.1"/>
    <property type="molecule type" value="Genomic_DNA"/>
</dbReference>
<dbReference type="EMBL" id="CH471063">
    <property type="protein sequence ID" value="EAW71151.1"/>
    <property type="molecule type" value="Genomic_DNA"/>
</dbReference>
<dbReference type="EMBL" id="BC007939">
    <property type="protein sequence ID" value="AAH07939.1"/>
    <property type="molecule type" value="mRNA"/>
</dbReference>
<dbReference type="CCDS" id="CCDS2527.1">
    <molecule id="Q96HZ4-1"/>
</dbReference>
<dbReference type="CCDS" id="CCDS46556.1">
    <molecule id="Q96HZ4-3"/>
</dbReference>
<dbReference type="CCDS" id="CCDS63180.1">
    <molecule id="Q96HZ4-4"/>
</dbReference>
<dbReference type="RefSeq" id="NP_001136325.1">
    <molecule id="Q96HZ4-3"/>
    <property type="nucleotide sequence ID" value="NM_001142853.3"/>
</dbReference>
<dbReference type="RefSeq" id="NP_001269363.1">
    <molecule id="Q96HZ4-4"/>
    <property type="nucleotide sequence ID" value="NM_001282434.2"/>
</dbReference>
<dbReference type="RefSeq" id="NP_061115.2">
    <molecule id="Q96HZ4-1"/>
    <property type="nucleotide sequence ID" value="NM_018645.5"/>
</dbReference>
<dbReference type="SMR" id="Q96HZ4"/>
<dbReference type="BioGRID" id="120682">
    <property type="interactions" value="52"/>
</dbReference>
<dbReference type="ELM" id="Q96HZ4"/>
<dbReference type="FunCoup" id="Q96HZ4">
    <property type="interactions" value="475"/>
</dbReference>
<dbReference type="IntAct" id="Q96HZ4">
    <property type="interactions" value="39"/>
</dbReference>
<dbReference type="MINT" id="Q96HZ4"/>
<dbReference type="STRING" id="9606.ENSP00000272937"/>
<dbReference type="iPTMnet" id="Q96HZ4"/>
<dbReference type="PhosphoSitePlus" id="Q96HZ4"/>
<dbReference type="BioMuta" id="HES6"/>
<dbReference type="DMDM" id="50400609"/>
<dbReference type="MassIVE" id="Q96HZ4"/>
<dbReference type="PaxDb" id="9606-ENSP00000272937"/>
<dbReference type="PeptideAtlas" id="Q96HZ4"/>
<dbReference type="ProteomicsDB" id="7344"/>
<dbReference type="ProteomicsDB" id="76797">
    <molecule id="Q96HZ4-1"/>
</dbReference>
<dbReference type="ProteomicsDB" id="76798">
    <molecule id="Q96HZ4-2"/>
</dbReference>
<dbReference type="ProteomicsDB" id="76799">
    <molecule id="Q96HZ4-3"/>
</dbReference>
<dbReference type="Antibodypedia" id="20277">
    <property type="antibodies" value="301 antibodies from 31 providers"/>
</dbReference>
<dbReference type="DNASU" id="55502"/>
<dbReference type="Ensembl" id="ENST00000272937.10">
    <molecule id="Q96HZ4-1"/>
    <property type="protein sequence ID" value="ENSP00000272937.5"/>
    <property type="gene ID" value="ENSG00000144485.11"/>
</dbReference>
<dbReference type="Ensembl" id="ENST00000409002.7">
    <molecule id="Q96HZ4-3"/>
    <property type="protein sequence ID" value="ENSP00000387155.3"/>
    <property type="gene ID" value="ENSG00000144485.11"/>
</dbReference>
<dbReference type="Ensembl" id="ENST00000409160.7">
    <molecule id="Q96HZ4-2"/>
    <property type="protein sequence ID" value="ENSP00000387215.3"/>
    <property type="gene ID" value="ENSG00000144485.11"/>
</dbReference>
<dbReference type="Ensembl" id="ENST00000409574.1">
    <molecule id="Q96HZ4-4"/>
    <property type="protein sequence ID" value="ENSP00000387008.1"/>
    <property type="gene ID" value="ENSG00000144485.11"/>
</dbReference>
<dbReference type="GeneID" id="55502"/>
<dbReference type="KEGG" id="hsa:55502"/>
<dbReference type="MANE-Select" id="ENST00000272937.10">
    <property type="protein sequence ID" value="ENSP00000272937.5"/>
    <property type="RefSeq nucleotide sequence ID" value="NM_018645.6"/>
    <property type="RefSeq protein sequence ID" value="NP_061115.2"/>
</dbReference>
<dbReference type="UCSC" id="uc002vxz.4">
    <molecule id="Q96HZ4-1"/>
    <property type="organism name" value="human"/>
</dbReference>
<dbReference type="AGR" id="HGNC:18254"/>
<dbReference type="CTD" id="55502"/>
<dbReference type="DisGeNET" id="55502"/>
<dbReference type="GeneCards" id="HES6"/>
<dbReference type="HGNC" id="HGNC:18254">
    <property type="gene designation" value="HES6"/>
</dbReference>
<dbReference type="HPA" id="ENSG00000144485">
    <property type="expression patterns" value="Tissue enhanced (brain, pituitary gland)"/>
</dbReference>
<dbReference type="MIM" id="610331">
    <property type="type" value="gene"/>
</dbReference>
<dbReference type="neXtProt" id="NX_Q96HZ4"/>
<dbReference type="OpenTargets" id="ENSG00000144485"/>
<dbReference type="PharmGKB" id="PA29253"/>
<dbReference type="VEuPathDB" id="HostDB:ENSG00000144485"/>
<dbReference type="eggNOG" id="KOG4304">
    <property type="taxonomic scope" value="Eukaryota"/>
</dbReference>
<dbReference type="GeneTree" id="ENSGT00940000161398"/>
<dbReference type="HOGENOM" id="CLU_068550_0_0_1"/>
<dbReference type="InParanoid" id="Q96HZ4"/>
<dbReference type="OMA" id="EDESCYG"/>
<dbReference type="OrthoDB" id="6085656at2759"/>
<dbReference type="PAN-GO" id="Q96HZ4">
    <property type="GO annotations" value="6 GO annotations based on evolutionary models"/>
</dbReference>
<dbReference type="PhylomeDB" id="Q96HZ4"/>
<dbReference type="TreeFam" id="TF351373"/>
<dbReference type="PathwayCommons" id="Q96HZ4"/>
<dbReference type="SignaLink" id="Q96HZ4"/>
<dbReference type="SIGNOR" id="Q96HZ4"/>
<dbReference type="BioGRID-ORCS" id="55502">
    <property type="hits" value="19 hits in 1176 CRISPR screens"/>
</dbReference>
<dbReference type="ChiTaRS" id="HES6">
    <property type="organism name" value="human"/>
</dbReference>
<dbReference type="GeneWiki" id="HES6"/>
<dbReference type="GenomeRNAi" id="55502"/>
<dbReference type="Pharos" id="Q96HZ4">
    <property type="development level" value="Tbio"/>
</dbReference>
<dbReference type="PRO" id="PR:Q96HZ4"/>
<dbReference type="Proteomes" id="UP000005640">
    <property type="component" value="Chromosome 2"/>
</dbReference>
<dbReference type="RNAct" id="Q96HZ4">
    <property type="molecule type" value="protein"/>
</dbReference>
<dbReference type="Bgee" id="ENSG00000144485">
    <property type="expression patterns" value="Expressed in ganglionic eminence and 121 other cell types or tissues"/>
</dbReference>
<dbReference type="ExpressionAtlas" id="Q96HZ4">
    <property type="expression patterns" value="baseline and differential"/>
</dbReference>
<dbReference type="GO" id="GO:0000785">
    <property type="term" value="C:chromatin"/>
    <property type="evidence" value="ECO:0000247"/>
    <property type="project" value="NTNU_SB"/>
</dbReference>
<dbReference type="GO" id="GO:0005634">
    <property type="term" value="C:nucleus"/>
    <property type="evidence" value="ECO:0000318"/>
    <property type="project" value="GO_Central"/>
</dbReference>
<dbReference type="GO" id="GO:0005667">
    <property type="term" value="C:transcription regulator complex"/>
    <property type="evidence" value="ECO:0000250"/>
    <property type="project" value="UniProtKB"/>
</dbReference>
<dbReference type="GO" id="GO:0000981">
    <property type="term" value="F:DNA-binding transcription factor activity, RNA polymerase II-specific"/>
    <property type="evidence" value="ECO:0000247"/>
    <property type="project" value="NTNU_SB"/>
</dbReference>
<dbReference type="GO" id="GO:0001227">
    <property type="term" value="F:DNA-binding transcription repressor activity, RNA polymerase II-specific"/>
    <property type="evidence" value="ECO:0007669"/>
    <property type="project" value="Ensembl"/>
</dbReference>
<dbReference type="GO" id="GO:0046983">
    <property type="term" value="F:protein dimerization activity"/>
    <property type="evidence" value="ECO:0007669"/>
    <property type="project" value="InterPro"/>
</dbReference>
<dbReference type="GO" id="GO:0000978">
    <property type="term" value="F:RNA polymerase II cis-regulatory region sequence-specific DNA binding"/>
    <property type="evidence" value="ECO:0000318"/>
    <property type="project" value="GO_Central"/>
</dbReference>
<dbReference type="GO" id="GO:0061629">
    <property type="term" value="F:RNA polymerase II-specific DNA-binding transcription factor binding"/>
    <property type="evidence" value="ECO:0000250"/>
    <property type="project" value="ARUK-UCL"/>
</dbReference>
<dbReference type="GO" id="GO:1990837">
    <property type="term" value="F:sequence-specific double-stranded DNA binding"/>
    <property type="evidence" value="ECO:0000314"/>
    <property type="project" value="ARUK-UCL"/>
</dbReference>
<dbReference type="GO" id="GO:0140416">
    <property type="term" value="F:transcription regulator inhibitor activity"/>
    <property type="evidence" value="ECO:0000250"/>
    <property type="project" value="ARUK-UCL"/>
</dbReference>
<dbReference type="GO" id="GO:0030154">
    <property type="term" value="P:cell differentiation"/>
    <property type="evidence" value="ECO:0007669"/>
    <property type="project" value="UniProtKB-KW"/>
</dbReference>
<dbReference type="GO" id="GO:0007399">
    <property type="term" value="P:nervous system development"/>
    <property type="evidence" value="ECO:0007669"/>
    <property type="project" value="Ensembl"/>
</dbReference>
<dbReference type="GO" id="GO:0045944">
    <property type="term" value="P:positive regulation of transcription by RNA polymerase II"/>
    <property type="evidence" value="ECO:0000250"/>
    <property type="project" value="ARUK-UCL"/>
</dbReference>
<dbReference type="GO" id="GO:0050767">
    <property type="term" value="P:regulation of neurogenesis"/>
    <property type="evidence" value="ECO:0000318"/>
    <property type="project" value="GO_Central"/>
</dbReference>
<dbReference type="FunFam" id="4.10.280.10:FF:000081">
    <property type="entry name" value="transcription cofactor HES-6 isoform X1"/>
    <property type="match status" value="1"/>
</dbReference>
<dbReference type="Gene3D" id="6.10.250.980">
    <property type="match status" value="1"/>
</dbReference>
<dbReference type="Gene3D" id="4.10.280.10">
    <property type="entry name" value="Helix-loop-helix DNA-binding domain"/>
    <property type="match status" value="1"/>
</dbReference>
<dbReference type="InterPro" id="IPR011598">
    <property type="entry name" value="bHLH_dom"/>
</dbReference>
<dbReference type="InterPro" id="IPR050370">
    <property type="entry name" value="HES_HEY"/>
</dbReference>
<dbReference type="InterPro" id="IPR036638">
    <property type="entry name" value="HLH_DNA-bd_sf"/>
</dbReference>
<dbReference type="InterPro" id="IPR003650">
    <property type="entry name" value="Orange_dom"/>
</dbReference>
<dbReference type="PANTHER" id="PTHR10985">
    <property type="entry name" value="BASIC HELIX-LOOP-HELIX TRANSCRIPTION FACTOR, HES-RELATED"/>
    <property type="match status" value="1"/>
</dbReference>
<dbReference type="Pfam" id="PF07527">
    <property type="entry name" value="Hairy_orange"/>
    <property type="match status" value="1"/>
</dbReference>
<dbReference type="Pfam" id="PF00010">
    <property type="entry name" value="HLH"/>
    <property type="match status" value="1"/>
</dbReference>
<dbReference type="SMART" id="SM00353">
    <property type="entry name" value="HLH"/>
    <property type="match status" value="1"/>
</dbReference>
<dbReference type="SUPFAM" id="SSF47459">
    <property type="entry name" value="HLH, helix-loop-helix DNA-binding domain"/>
    <property type="match status" value="1"/>
</dbReference>
<dbReference type="SUPFAM" id="SSF158457">
    <property type="entry name" value="Orange domain-like"/>
    <property type="match status" value="1"/>
</dbReference>
<dbReference type="PROSITE" id="PS50888">
    <property type="entry name" value="BHLH"/>
    <property type="match status" value="1"/>
</dbReference>
<dbReference type="PROSITE" id="PS51054">
    <property type="entry name" value="ORANGE"/>
    <property type="match status" value="1"/>
</dbReference>
<feature type="chain" id="PRO_0000127214" description="Transcription cofactor HES-6">
    <location>
        <begin position="1"/>
        <end position="224"/>
    </location>
</feature>
<feature type="domain" description="bHLH" evidence="3">
    <location>
        <begin position="25"/>
        <end position="77"/>
    </location>
</feature>
<feature type="domain" description="Orange" evidence="2">
    <location>
        <begin position="96"/>
        <end position="129"/>
    </location>
</feature>
<feature type="region of interest" description="Disordered" evidence="4">
    <location>
        <begin position="1"/>
        <end position="31"/>
    </location>
</feature>
<feature type="region of interest" description="Disordered" evidence="4">
    <location>
        <begin position="147"/>
        <end position="205"/>
    </location>
</feature>
<feature type="short sequence motif" description="WRPW motif">
    <location>
        <begin position="221"/>
        <end position="224"/>
    </location>
</feature>
<feature type="compositionally biased region" description="Basic and acidic residues" evidence="4">
    <location>
        <begin position="8"/>
        <end position="25"/>
    </location>
</feature>
<feature type="compositionally biased region" description="Low complexity" evidence="4">
    <location>
        <begin position="147"/>
        <end position="161"/>
    </location>
</feature>
<feature type="compositionally biased region" description="Acidic residues" evidence="4">
    <location>
        <begin position="181"/>
        <end position="190"/>
    </location>
</feature>
<feature type="splice variant" id="VSP_040128" description="In isoform 3." evidence="5">
    <location>
        <begin position="57"/>
        <end position="58"/>
    </location>
</feature>
<feature type="splice variant" id="VSP_055615" description="In isoform 4." evidence="7">
    <original>VRRVQGVLRGRAREREQLQAEASERFAAGYIQCMHEVHTFVS</original>
    <variation>SASSCRRKRASASLPATSSACTRCTRSCPRARPSTLPSLPSS</variation>
    <location>
        <begin position="71"/>
        <end position="112"/>
    </location>
</feature>
<feature type="splice variant" id="VSP_011152" description="In isoform 2." evidence="6">
    <original>EREQLQAEASERFAAGYIQCMHEVHTFVSTCQAIDATVAAELLNHLLESMPLREGSSFQDLLGDALAGPPRAPGRSGWPAGGAPGSPIPSPPGPGDDLCSDLEEAPEAELSQAPAEGPDLVPAALGSLTTAQIARSVWRPW</original>
    <variation>GEWRRGGRGRRPRAPVTPARRRTSLPAPLSCRRRGLPPEQGAPPRLLGEPRPRGPGGLGHAVAAHRAGRGSLPPTLGPRARAAAGGSERALRCRLHPVHARGAHVRVHVPGHRRYRRCRAPEPSARVHAAA</variation>
    <location>
        <begin position="84"/>
        <end position="224"/>
    </location>
</feature>
<feature type="splice variant" id="VSP_055616" description="In isoform 4." evidence="7">
    <location>
        <begin position="113"/>
        <end position="224"/>
    </location>
</feature>
<feature type="sequence variant" id="VAR_019540" description="In dbSNP:rs3739061.">
    <original>R</original>
    <variation>Q</variation>
    <location>
        <position position="218"/>
    </location>
</feature>
<feature type="sequence conflict" description="In Ref. 1; BAA96082." evidence="7" ref="1">
    <original>P</original>
    <variation>R</variation>
    <location>
        <position position="205"/>
    </location>
</feature>
<feature type="sequence conflict" description="In Ref. 1; BAA96082." evidence="7" ref="1">
    <original>SL</original>
    <variation>AV</variation>
    <location>
        <begin position="210"/>
        <end position="211"/>
    </location>
</feature>
<accession>Q96HZ4</accession>
<accession>A8KAP6</accession>
<accession>B8ZZA9</accession>
<accession>Q53SN9</accession>
<accession>Q8N2J2</accession>
<accession>Q96T93</accession>
<accession>Q9P2S3</accession>
<gene>
    <name evidence="9" type="primary">HES6</name>
    <name type="synonym">BHLHB41</name>
</gene>
<name>HES6_HUMAN</name>